<comment type="function">
    <text evidence="2 5">Cytochrome P450 monooxygenase; part of the gene cluster that mediates the biosynthesis of the indole diterpenes penitrems (PubMed:26213965). The geranylgeranyl diphosphate (GGPP) synthase penG catalyzes the first step in penitrem biosynthesis via conversion of farnesyl pyrophosphate and isopentyl pyrophosphate into geranylgeranyl pyrophosphate (GGPP) (Probable). Condensation of indole-3-glycerol phosphate with GGPP by the prenyl transferase penC then forms 3-geranylgeranylindole (3-GGI) (Probable). Epoxidation by the FAD-dependent monooxygenase penM leads to a epoxidized-GGI that is substrate of the terpene cyclase penB for cyclization to yield paspaline (Probable). Paspaline is subsequently converted to 13-desoxypaxilline by the cytochrome P450 monooxygenase penP, the latter being then converted to paxilline by the cytochrome P450 monooxygenase penQ (PubMed:26213965). Paxilline is converted to beta-paxitriol via C-10 ketoreduction by the short-chain dehydrogenase PC-15 which can be monoprenylated at the C-20 by the indole diterpene prenyltransferase penD (Probable). A two-step elimination (acetylation and elimination) process performed by the O-acetyltransferase PC-16 and the P.simplicissimum ptmI-ortholog not yet identified in P.crustosum, leads to the production of the prenylated form of penijanthine (Probable). The FAD-linked oxidoreductase ptmO then converts the prenylated form of penijanthine into PC-M5 which is in turn transformed into PC-M4 by the aromatic dimethylallyltransferase PC-22 (Probable). A series of oxidation steps involving 4 cytochrome P450 monooxygenases (PC-21, PC-05, PC-23, PC-20) and a FAD-dependent monooxygenase (PC-14) are required for the transformation of PC-M4 to penitrems A and E. Synthesis of these final products is proposed to proceed via penitrems D and C (PC-21, PC-05, PC-14) and penitrems B and F (PC-21, PC-05, PC-14, PC-23) (Probable).</text>
</comment>
<comment type="cofactor">
    <cofactor evidence="1">
        <name>heme</name>
        <dbReference type="ChEBI" id="CHEBI:30413"/>
    </cofactor>
</comment>
<comment type="pathway">
    <text evidence="5">Secondary metabolite biosynthesis.</text>
</comment>
<comment type="similarity">
    <text evidence="4">Belongs to the cytochrome P450 family.</text>
</comment>
<feature type="chain" id="PRO_0000446587" description="Cytochrome P450 monooxygenase PC-23">
    <location>
        <begin position="1" status="less than"/>
        <end position="204"/>
    </location>
</feature>
<feature type="binding site" description="axial binding residue" evidence="1">
    <location>
        <position position="138"/>
    </location>
    <ligand>
        <name>heme</name>
        <dbReference type="ChEBI" id="CHEBI:30413"/>
    </ligand>
    <ligandPart>
        <name>Fe</name>
        <dbReference type="ChEBI" id="CHEBI:18248"/>
    </ligandPart>
</feature>
<feature type="non-terminal residue" evidence="4">
    <location>
        <position position="1"/>
    </location>
</feature>
<gene>
    <name evidence="3" type="primary">PC-23</name>
</gene>
<dbReference type="EC" id="1.-.-.-" evidence="5"/>
<dbReference type="EMBL" id="KC963408">
    <property type="protein sequence ID" value="AGZ20203.1"/>
    <property type="molecule type" value="Genomic_DNA"/>
</dbReference>
<dbReference type="SMR" id="A0A0E3D8L2"/>
<dbReference type="GO" id="GO:0020037">
    <property type="term" value="F:heme binding"/>
    <property type="evidence" value="ECO:0007669"/>
    <property type="project" value="InterPro"/>
</dbReference>
<dbReference type="GO" id="GO:0005506">
    <property type="term" value="F:iron ion binding"/>
    <property type="evidence" value="ECO:0007669"/>
    <property type="project" value="InterPro"/>
</dbReference>
<dbReference type="GO" id="GO:0004497">
    <property type="term" value="F:monooxygenase activity"/>
    <property type="evidence" value="ECO:0007669"/>
    <property type="project" value="UniProtKB-KW"/>
</dbReference>
<dbReference type="GO" id="GO:0016705">
    <property type="term" value="F:oxidoreductase activity, acting on paired donors, with incorporation or reduction of molecular oxygen"/>
    <property type="evidence" value="ECO:0007669"/>
    <property type="project" value="InterPro"/>
</dbReference>
<dbReference type="GO" id="GO:0043386">
    <property type="term" value="P:mycotoxin biosynthetic process"/>
    <property type="evidence" value="ECO:0007669"/>
    <property type="project" value="UniProtKB-ARBA"/>
</dbReference>
<dbReference type="Gene3D" id="1.10.630.10">
    <property type="entry name" value="Cytochrome P450"/>
    <property type="match status" value="1"/>
</dbReference>
<dbReference type="InterPro" id="IPR001128">
    <property type="entry name" value="Cyt_P450"/>
</dbReference>
<dbReference type="InterPro" id="IPR002403">
    <property type="entry name" value="Cyt_P450_E_grp-IV"/>
</dbReference>
<dbReference type="InterPro" id="IPR036396">
    <property type="entry name" value="Cyt_P450_sf"/>
</dbReference>
<dbReference type="InterPro" id="IPR050121">
    <property type="entry name" value="Cytochrome_P450_monoxygenase"/>
</dbReference>
<dbReference type="PANTHER" id="PTHR24305">
    <property type="entry name" value="CYTOCHROME P450"/>
    <property type="match status" value="1"/>
</dbReference>
<dbReference type="PANTHER" id="PTHR24305:SF107">
    <property type="entry name" value="P450, PUTATIVE (EUROFUNG)-RELATED"/>
    <property type="match status" value="1"/>
</dbReference>
<dbReference type="Pfam" id="PF00067">
    <property type="entry name" value="p450"/>
    <property type="match status" value="1"/>
</dbReference>
<dbReference type="PRINTS" id="PR00465">
    <property type="entry name" value="EP450IV"/>
</dbReference>
<dbReference type="PRINTS" id="PR00385">
    <property type="entry name" value="P450"/>
</dbReference>
<dbReference type="SUPFAM" id="SSF48264">
    <property type="entry name" value="Cytochrome P450"/>
    <property type="match status" value="1"/>
</dbReference>
<name>PC23_PENCR</name>
<evidence type="ECO:0000250" key="1">
    <source>
        <dbReference type="UniProtKB" id="P04798"/>
    </source>
</evidence>
<evidence type="ECO:0000269" key="2">
    <source>
    </source>
</evidence>
<evidence type="ECO:0000303" key="3">
    <source>
    </source>
</evidence>
<evidence type="ECO:0000305" key="4"/>
<evidence type="ECO:0000305" key="5">
    <source>
    </source>
</evidence>
<protein>
    <recommendedName>
        <fullName evidence="3">Cytochrome P450 monooxygenase PC-23</fullName>
        <ecNumber evidence="5">1.-.-.-</ecNumber>
    </recommendedName>
    <alternativeName>
        <fullName evidence="3">Penitrem biosynthesis cluster protein 23</fullName>
    </alternativeName>
</protein>
<proteinExistence type="inferred from homology"/>
<sequence length="204" mass="23047">YAFLLLHQHPDILDDLRTEHGQVCGLNRQSILLALQSRPRLLNDLKLTHAVLKETLRLFPMGPVLRKCPRVPSEMIEYEGRTYDIRNHIVAISHNSLHRRPDLFPDPDAFNPYRFLPGAVIPIPADAWRPFEKGNGYCVGQELAMIQMKVMLLLTLTEFDFQPKYARKAARGPDIYGGYAYTTGSGIGPTPAGGLPMRVDKRAK</sequence>
<accession>A0A0E3D8L2</accession>
<keyword id="KW-0349">Heme</keyword>
<keyword id="KW-0408">Iron</keyword>
<keyword id="KW-0479">Metal-binding</keyword>
<keyword id="KW-0503">Monooxygenase</keyword>
<keyword id="KW-0560">Oxidoreductase</keyword>
<organism>
    <name type="scientific">Penicillium crustosum</name>
    <name type="common">Blue mold fungus</name>
    <dbReference type="NCBI Taxonomy" id="36656"/>
    <lineage>
        <taxon>Eukaryota</taxon>
        <taxon>Fungi</taxon>
        <taxon>Dikarya</taxon>
        <taxon>Ascomycota</taxon>
        <taxon>Pezizomycotina</taxon>
        <taxon>Eurotiomycetes</taxon>
        <taxon>Eurotiomycetidae</taxon>
        <taxon>Eurotiales</taxon>
        <taxon>Aspergillaceae</taxon>
        <taxon>Penicillium</taxon>
    </lineage>
</organism>
<reference key="1">
    <citation type="journal article" date="2015" name="Toxins">
        <title>Molecular cloning and functional analysis of gene clusters for the biosynthesis of indole-diterpenes in Penicillium crustosum and P. janthinellum.</title>
        <authorList>
            <person name="Nicholson M.J."/>
            <person name="Eaton C.J."/>
            <person name="Starkel C."/>
            <person name="Tapper B.A."/>
            <person name="Cox M.P."/>
            <person name="Scott B."/>
        </authorList>
    </citation>
    <scope>NUCLEOTIDE SEQUENCE [GENOMIC DNA]</scope>
    <scope>IDENTIFICATION</scope>
    <scope>FUNCTION</scope>
    <scope>PATHWAY</scope>
    <source>
        <strain>PN2402</strain>
    </source>
</reference>